<organism>
    <name type="scientific">Bacillus pumilus (strain SAFR-032)</name>
    <dbReference type="NCBI Taxonomy" id="315750"/>
    <lineage>
        <taxon>Bacteria</taxon>
        <taxon>Bacillati</taxon>
        <taxon>Bacillota</taxon>
        <taxon>Bacilli</taxon>
        <taxon>Bacillales</taxon>
        <taxon>Bacillaceae</taxon>
        <taxon>Bacillus</taxon>
    </lineage>
</organism>
<evidence type="ECO:0000255" key="1">
    <source>
        <dbReference type="HAMAP-Rule" id="MF_01280"/>
    </source>
</evidence>
<feature type="chain" id="PRO_1000067410" description="Processive diacylglycerol beta-glucosyltransferase">
    <location>
        <begin position="1"/>
        <end position="383"/>
    </location>
</feature>
<keyword id="KW-0119">Carbohydrate metabolism</keyword>
<keyword id="KW-1003">Cell membrane</keyword>
<keyword id="KW-0328">Glycosyltransferase</keyword>
<keyword id="KW-0444">Lipid biosynthesis</keyword>
<keyword id="KW-0443">Lipid metabolism</keyword>
<keyword id="KW-0472">Membrane</keyword>
<keyword id="KW-0808">Transferase</keyword>
<sequence>MNTNKKILILTANYGNGHMQVAKTLYDECKSQGFEHVVVSNLYQESNPIVSEVTQYLYLKSFSIGKQFYRLFYYGVDKIYNKRKFNIYLKMGNKRLDELIQLHNPDIIIITFPMIVVPEYRNKTGKIIPTFNVMTDFCLHKIWVHENIDRYYVATDYVKQKLVEIGTHPSDVKVTGIPIRPQFEADVPKSKIYKKYGLSSNKKVLLIMAGAHGVLKNVKELCEALLLDSEVQIVVVCGKNAALKQSLSDLEQTHPDQLKALGYVEQIDELFRVTDCMITKPGGITLTEATALGVPVILYKPVPGQEKENAHFFEDYGAAIVINRHEDILESVTNLLQDEEKLESMKQNMKSLHLKHSSQTILEDIVEQSDLITNNKTYARALS</sequence>
<name>UGTP_BACP2</name>
<comment type="function">
    <text evidence="1">Processive glucosyltransferase involved in the biosynthesis of both the bilayer- and non-bilayer-forming membrane glucolipids. Is able to successively transfer up to three glucosyl residues to diacylglycerol (DAG), thereby catalyzing the formation of beta-monoglucosyl-DAG (3-O-(beta-D-glucopyranosyl)-1,2-diacyl-sn-glycerol), beta-diglucosyl-DAG (3-O-(beta-D-glucopyranosyl-beta-(1-&gt;6)-D-glucopyranosyl)-1,2-diacyl-sn-glycerol) and beta-triglucosyl-DAG (3-O-(beta-D-glucopyranosyl-beta-(1-&gt;6)-D-glucopyranosyl-beta-(1-&gt;6)-D-glucopyranosyl)-1,2-diacyl-sn-glycerol). Beta-diglucosyl-DAG is the predominant glycolipid found in Bacillales and is also used as a membrane anchor for lipoteichoic acid (LTA).</text>
</comment>
<comment type="catalytic activity">
    <reaction>
        <text>a 1,2-diacyl-3-O-(beta-D-glucopyranosyl)-sn-glycerol + UDP-alpha-D-glucose = a 1,2-diacyl-3-O-(beta-D-Glc-(1-&gt;6)-beta-D-Glc)-sn-glycerol + UDP + H(+)</text>
        <dbReference type="Rhea" id="RHEA:39031"/>
        <dbReference type="ChEBI" id="CHEBI:15378"/>
        <dbReference type="ChEBI" id="CHEBI:58223"/>
        <dbReference type="ChEBI" id="CHEBI:58885"/>
        <dbReference type="ChEBI" id="CHEBI:75799"/>
        <dbReference type="ChEBI" id="CHEBI:76264"/>
        <dbReference type="EC" id="2.4.1.315"/>
    </reaction>
</comment>
<comment type="catalytic activity">
    <reaction>
        <text>a 1,2-diacyl-3-O-(beta-D-Glc-(1-&gt;6)-beta-D-Glc)-sn-glycerol + UDP-alpha-D-glucose = a 1,2-diacyl-3-O-(beta-D-Glc-(1-&gt;6)-beta-D-Glc-(1-&gt;6)-beta-D-Glc)-sn-glycerol + UDP + H(+)</text>
        <dbReference type="Rhea" id="RHEA:39027"/>
        <dbReference type="ChEBI" id="CHEBI:15378"/>
        <dbReference type="ChEBI" id="CHEBI:58223"/>
        <dbReference type="ChEBI" id="CHEBI:58885"/>
        <dbReference type="ChEBI" id="CHEBI:76264"/>
        <dbReference type="ChEBI" id="CHEBI:76265"/>
        <dbReference type="EC" id="2.4.1.315"/>
    </reaction>
</comment>
<comment type="catalytic activity">
    <reaction evidence="1">
        <text>a 1,2-diacyl-sn-glycerol + UDP-alpha-D-glucose = a 1,2-diacyl-3-O-(beta-D-glucopyranosyl)-sn-glycerol + UDP + H(+)</text>
        <dbReference type="Rhea" id="RHEA:17285"/>
        <dbReference type="ChEBI" id="CHEBI:15378"/>
        <dbReference type="ChEBI" id="CHEBI:17815"/>
        <dbReference type="ChEBI" id="CHEBI:58223"/>
        <dbReference type="ChEBI" id="CHEBI:58885"/>
        <dbReference type="ChEBI" id="CHEBI:75799"/>
    </reaction>
</comment>
<comment type="pathway">
    <text evidence="1">Glycolipid metabolism; diglucosyl-diacylglycerol biosynthesis.</text>
</comment>
<comment type="subcellular location">
    <subcellularLocation>
        <location evidence="1">Cell membrane</location>
    </subcellularLocation>
</comment>
<comment type="similarity">
    <text evidence="1">Belongs to the glycosyltransferase 28 family. UgtP subfamily.</text>
</comment>
<reference key="1">
    <citation type="journal article" date="2007" name="PLoS ONE">
        <title>Paradoxical DNA repair and peroxide resistance gene conservation in Bacillus pumilus SAFR-032.</title>
        <authorList>
            <person name="Gioia J."/>
            <person name="Yerrapragada S."/>
            <person name="Qin X."/>
            <person name="Jiang H."/>
            <person name="Igboeli O.C."/>
            <person name="Muzny D."/>
            <person name="Dugan-Rocha S."/>
            <person name="Ding Y."/>
            <person name="Hawes A."/>
            <person name="Liu W."/>
            <person name="Perez L."/>
            <person name="Kovar C."/>
            <person name="Dinh H."/>
            <person name="Lee S."/>
            <person name="Nazareth L."/>
            <person name="Blyth P."/>
            <person name="Holder M."/>
            <person name="Buhay C."/>
            <person name="Tirumalai M.R."/>
            <person name="Liu Y."/>
            <person name="Dasgupta I."/>
            <person name="Bokhetache L."/>
            <person name="Fujita M."/>
            <person name="Karouia F."/>
            <person name="Eswara Moorthy P."/>
            <person name="Siefert J."/>
            <person name="Uzman A."/>
            <person name="Buzumbo P."/>
            <person name="Verma A."/>
            <person name="Zwiya H."/>
            <person name="McWilliams B.D."/>
            <person name="Olowu A."/>
            <person name="Clinkenbeard K.D."/>
            <person name="Newcombe D."/>
            <person name="Golebiewski L."/>
            <person name="Petrosino J.F."/>
            <person name="Nicholson W.L."/>
            <person name="Fox G.E."/>
            <person name="Venkateswaran K."/>
            <person name="Highlander S.K."/>
            <person name="Weinstock G.M."/>
        </authorList>
    </citation>
    <scope>NUCLEOTIDE SEQUENCE [LARGE SCALE GENOMIC DNA]</scope>
    <source>
        <strain>SAFR-032</strain>
    </source>
</reference>
<gene>
    <name evidence="1" type="primary">ugtP</name>
    <name type="ordered locus">BPUM_1928</name>
</gene>
<dbReference type="EC" id="2.4.1.315"/>
<dbReference type="EMBL" id="CP000813">
    <property type="protein sequence ID" value="ABV62598.1"/>
    <property type="molecule type" value="Genomic_DNA"/>
</dbReference>
<dbReference type="RefSeq" id="WP_012010316.1">
    <property type="nucleotide sequence ID" value="NC_009848.4"/>
</dbReference>
<dbReference type="SMR" id="A8FED1"/>
<dbReference type="STRING" id="315750.BPUM_1928"/>
<dbReference type="CAZy" id="GT28">
    <property type="family name" value="Glycosyltransferase Family 28"/>
</dbReference>
<dbReference type="GeneID" id="5621192"/>
<dbReference type="KEGG" id="bpu:BPUM_1928"/>
<dbReference type="eggNOG" id="COG0707">
    <property type="taxonomic scope" value="Bacteria"/>
</dbReference>
<dbReference type="HOGENOM" id="CLU_028367_0_1_9"/>
<dbReference type="OrthoDB" id="9815663at2"/>
<dbReference type="UniPathway" id="UPA00894"/>
<dbReference type="Proteomes" id="UP000001355">
    <property type="component" value="Chromosome"/>
</dbReference>
<dbReference type="GO" id="GO:0005886">
    <property type="term" value="C:plasma membrane"/>
    <property type="evidence" value="ECO:0007669"/>
    <property type="project" value="UniProtKB-SubCell"/>
</dbReference>
<dbReference type="GO" id="GO:0047228">
    <property type="term" value="F:1,2-diacylglycerol 3-glucosyltransferase activity"/>
    <property type="evidence" value="ECO:0007669"/>
    <property type="project" value="UniProtKB-UniRule"/>
</dbReference>
<dbReference type="GO" id="GO:0009246">
    <property type="term" value="P:enterobacterial common antigen biosynthetic process"/>
    <property type="evidence" value="ECO:0007669"/>
    <property type="project" value="UniProtKB-UniPathway"/>
</dbReference>
<dbReference type="GO" id="GO:0009247">
    <property type="term" value="P:glycolipid biosynthetic process"/>
    <property type="evidence" value="ECO:0007669"/>
    <property type="project" value="UniProtKB-UniRule"/>
</dbReference>
<dbReference type="GO" id="GO:0070395">
    <property type="term" value="P:lipoteichoic acid biosynthetic process"/>
    <property type="evidence" value="ECO:0007669"/>
    <property type="project" value="UniProtKB-UniRule"/>
</dbReference>
<dbReference type="CDD" id="cd17507">
    <property type="entry name" value="GT28_Beta-DGS-like"/>
    <property type="match status" value="1"/>
</dbReference>
<dbReference type="Gene3D" id="3.40.50.2000">
    <property type="entry name" value="Glycogen Phosphorylase B"/>
    <property type="match status" value="1"/>
</dbReference>
<dbReference type="HAMAP" id="MF_01280">
    <property type="entry name" value="Diacylglyc_glucosyltr"/>
    <property type="match status" value="1"/>
</dbReference>
<dbReference type="InterPro" id="IPR009695">
    <property type="entry name" value="Diacylglyc_glucosyltr_N"/>
</dbReference>
<dbReference type="InterPro" id="IPR001296">
    <property type="entry name" value="Glyco_trans_1"/>
</dbReference>
<dbReference type="InterPro" id="IPR050519">
    <property type="entry name" value="Glycosyltransf_28_UgtP"/>
</dbReference>
<dbReference type="InterPro" id="IPR023589">
    <property type="entry name" value="Pro_diacylglycrl_glcsylTrfase"/>
</dbReference>
<dbReference type="NCBIfam" id="NF010135">
    <property type="entry name" value="PRK13609.1"/>
    <property type="match status" value="1"/>
</dbReference>
<dbReference type="PANTHER" id="PTHR43025">
    <property type="entry name" value="MONOGALACTOSYLDIACYLGLYCEROL SYNTHASE"/>
    <property type="match status" value="1"/>
</dbReference>
<dbReference type="PANTHER" id="PTHR43025:SF3">
    <property type="entry name" value="MONOGALACTOSYLDIACYLGLYCEROL SYNTHASE 1, CHLOROPLASTIC"/>
    <property type="match status" value="1"/>
</dbReference>
<dbReference type="Pfam" id="PF00534">
    <property type="entry name" value="Glycos_transf_1"/>
    <property type="match status" value="1"/>
</dbReference>
<dbReference type="Pfam" id="PF06925">
    <property type="entry name" value="MGDG_synth"/>
    <property type="match status" value="1"/>
</dbReference>
<dbReference type="SUPFAM" id="SSF53756">
    <property type="entry name" value="UDP-Glycosyltransferase/glycogen phosphorylase"/>
    <property type="match status" value="1"/>
</dbReference>
<proteinExistence type="inferred from homology"/>
<protein>
    <recommendedName>
        <fullName evidence="1">Processive diacylglycerol beta-glucosyltransferase</fullName>
        <ecNumber>2.4.1.315</ecNumber>
    </recommendedName>
    <alternativeName>
        <fullName evidence="1">Beta-diglucosyldiacylglycerol synthase</fullName>
        <shortName evidence="1">Beta-DGS</shortName>
        <shortName evidence="1">DGlcDAG synthase</shortName>
        <shortName evidence="1">Glc2-DAG synthase</shortName>
    </alternativeName>
    <alternativeName>
        <fullName evidence="1">Beta-gentiobiosyldiacylglycerol synthase</fullName>
    </alternativeName>
    <alternativeName>
        <fullName evidence="1">Beta-monoglucosyldiacylglycerol synthase</fullName>
        <shortName evidence="1">Beta-MGS</shortName>
        <shortName evidence="1">MGlcDAG synthase</shortName>
    </alternativeName>
    <alternativeName>
        <fullName evidence="1">Beta-triglucosyldiacylglycerol synthase</fullName>
        <shortName evidence="1">TGlcDAG synthase</shortName>
    </alternativeName>
    <alternativeName>
        <fullName>Diglucosyl diacylglycerol synthase (1,6-linking)</fullName>
    </alternativeName>
    <alternativeName>
        <fullName evidence="1">Glucosyl-beta-1,6-glucosyldiacylglycerol synthase</fullName>
    </alternativeName>
    <alternativeName>
        <fullName evidence="1">UDP glucosyltransferase</fullName>
    </alternativeName>
    <alternativeName>
        <fullName evidence="1">UDP-glucose:1,2-diacylglycerol-3-beta-D-glucosyltransferase</fullName>
    </alternativeName>
</protein>
<accession>A8FED1</accession>